<protein>
    <recommendedName>
        <fullName>Immunoglobulin A1 protease autotransporter</fullName>
        <ecNumber>3.4.21.72</ecNumber>
    </recommendedName>
    <component>
        <recommendedName>
            <fullName>Immunoglobulin A1 protease</fullName>
            <shortName>IGA1 protease</shortName>
        </recommendedName>
    </component>
    <component>
        <recommendedName>
            <fullName>Immunoglobulin A1 protease translocator</fullName>
        </recommendedName>
        <alternativeName>
            <fullName>Helper peptide</fullName>
        </alternativeName>
    </component>
</protein>
<gene>
    <name type="primary">iga</name>
    <name type="synonym">iga1</name>
    <name type="ordered locus">HI_0990</name>
</gene>
<accession>P44969</accession>
<proteinExistence type="evidence at protein level"/>
<organism>
    <name type="scientific">Haemophilus influenzae (strain ATCC 51907 / DSM 11121 / KW20 / Rd)</name>
    <dbReference type="NCBI Taxonomy" id="71421"/>
    <lineage>
        <taxon>Bacteria</taxon>
        <taxon>Pseudomonadati</taxon>
        <taxon>Pseudomonadota</taxon>
        <taxon>Gammaproteobacteria</taxon>
        <taxon>Pasteurellales</taxon>
        <taxon>Pasteurellaceae</taxon>
        <taxon>Haemophilus</taxon>
    </lineage>
</organism>
<name>IGA0_HAEIN</name>
<feature type="signal peptide" evidence="2">
    <location>
        <begin position="1"/>
        <end position="25"/>
    </location>
</feature>
<feature type="chain" id="PRO_0000387598" description="Immunoglobulin A1 protease autotransporter">
    <location>
        <begin position="26"/>
        <end position="1694"/>
    </location>
</feature>
<feature type="chain" id="PRO_0000026958" description="Immunoglobulin A1 protease">
    <location>
        <begin position="26"/>
        <end position="1014"/>
    </location>
</feature>
<feature type="chain" id="PRO_0000026959" description="Immunoglobulin A1 protease translocator" evidence="2">
    <location>
        <begin position="1015"/>
        <end position="1694"/>
    </location>
</feature>
<feature type="domain" description="Peptidase S6" evidence="4">
    <location>
        <begin position="26"/>
        <end position="332"/>
    </location>
</feature>
<feature type="domain" description="Autotransporter" evidence="3">
    <location>
        <begin position="1442"/>
        <end position="1694"/>
    </location>
</feature>
<feature type="region of interest" description="Disordered" evidence="5">
    <location>
        <begin position="991"/>
        <end position="1403"/>
    </location>
</feature>
<feature type="compositionally biased region" description="Polar residues" evidence="5">
    <location>
        <begin position="997"/>
        <end position="1021"/>
    </location>
</feature>
<feature type="compositionally biased region" description="Low complexity" evidence="5">
    <location>
        <begin position="1037"/>
        <end position="1047"/>
    </location>
</feature>
<feature type="compositionally biased region" description="Basic and acidic residues" evidence="5">
    <location>
        <begin position="1049"/>
        <end position="1061"/>
    </location>
</feature>
<feature type="compositionally biased region" description="Polar residues" evidence="5">
    <location>
        <begin position="1082"/>
        <end position="1095"/>
    </location>
</feature>
<feature type="compositionally biased region" description="Basic and acidic residues" evidence="5">
    <location>
        <begin position="1104"/>
        <end position="1124"/>
    </location>
</feature>
<feature type="compositionally biased region" description="Basic and acidic residues" evidence="5">
    <location>
        <begin position="1142"/>
        <end position="1154"/>
    </location>
</feature>
<feature type="compositionally biased region" description="Polar residues" evidence="5">
    <location>
        <begin position="1155"/>
        <end position="1178"/>
    </location>
</feature>
<feature type="compositionally biased region" description="Polar residues" evidence="5">
    <location>
        <begin position="1199"/>
        <end position="1210"/>
    </location>
</feature>
<feature type="compositionally biased region" description="Basic and acidic residues" evidence="5">
    <location>
        <begin position="1211"/>
        <end position="1226"/>
    </location>
</feature>
<feature type="compositionally biased region" description="Polar residues" evidence="5">
    <location>
        <begin position="1227"/>
        <end position="1247"/>
    </location>
</feature>
<feature type="compositionally biased region" description="Polar residues" evidence="5">
    <location>
        <begin position="1255"/>
        <end position="1297"/>
    </location>
</feature>
<feature type="compositionally biased region" description="Polar residues" evidence="5">
    <location>
        <begin position="1308"/>
        <end position="1336"/>
    </location>
</feature>
<feature type="compositionally biased region" description="Low complexity" evidence="5">
    <location>
        <begin position="1352"/>
        <end position="1370"/>
    </location>
</feature>
<feature type="compositionally biased region" description="Basic residues" evidence="5">
    <location>
        <begin position="1374"/>
        <end position="1384"/>
    </location>
</feature>
<feature type="active site" evidence="6">
    <location>
        <position position="288"/>
    </location>
</feature>
<feature type="sequence conflict" description="In Ref. 1; CAB56789." evidence="6" ref="1">
    <original>EN</original>
    <variation>GV</variation>
    <location>
        <begin position="253"/>
        <end position="254"/>
    </location>
</feature>
<feature type="sequence conflict" description="In Ref. 1; CAB56789." evidence="6" ref="1">
    <original>G</original>
    <variation>A</variation>
    <location>
        <position position="272"/>
    </location>
</feature>
<feature type="sequence conflict" description="In Ref. 1; CAB56789." evidence="6" ref="1">
    <original>G</original>
    <variation>E</variation>
    <location>
        <position position="464"/>
    </location>
</feature>
<feature type="sequence conflict" description="In Ref. 1; CAB56789." evidence="6" ref="1">
    <original>S</original>
    <variation>T</variation>
    <location>
        <position position="866"/>
    </location>
</feature>
<feature type="sequence conflict" description="In Ref. 1; CAB56789." evidence="6" ref="1">
    <original>A</original>
    <variation>D</variation>
    <location>
        <position position="1036"/>
    </location>
</feature>
<feature type="sequence conflict" description="In Ref. 1; CAB56789." evidence="6" ref="1">
    <original>A</original>
    <variation>G</variation>
    <location>
        <position position="1074"/>
    </location>
</feature>
<feature type="sequence conflict" description="In Ref. 1; CAB56789." evidence="6" ref="1">
    <original>A</original>
    <variation>G</variation>
    <location>
        <position position="1421"/>
    </location>
</feature>
<feature type="sequence conflict" description="In Ref. 1; CAB56789." evidence="6" ref="1">
    <original>H</original>
    <variation>T</variation>
    <location>
        <position position="1545"/>
    </location>
</feature>
<feature type="strand" evidence="7">
    <location>
        <begin position="30"/>
        <end position="32"/>
    </location>
</feature>
<feature type="helix" evidence="7">
    <location>
        <begin position="34"/>
        <end position="42"/>
    </location>
</feature>
<feature type="strand" evidence="7">
    <location>
        <begin position="55"/>
        <end position="57"/>
    </location>
</feature>
<feature type="strand" evidence="7">
    <location>
        <begin position="63"/>
        <end position="69"/>
    </location>
</feature>
<feature type="helix" evidence="7">
    <location>
        <begin position="77"/>
        <end position="79"/>
    </location>
</feature>
<feature type="turn" evidence="7">
    <location>
        <begin position="82"/>
        <end position="84"/>
    </location>
</feature>
<feature type="strand" evidence="7">
    <location>
        <begin position="88"/>
        <end position="91"/>
    </location>
</feature>
<feature type="strand" evidence="7">
    <location>
        <begin position="94"/>
        <end position="97"/>
    </location>
</feature>
<feature type="strand" evidence="7">
    <location>
        <begin position="106"/>
        <end position="109"/>
    </location>
</feature>
<feature type="strand" evidence="7">
    <location>
        <begin position="111"/>
        <end position="113"/>
    </location>
</feature>
<feature type="helix" evidence="7">
    <location>
        <begin position="130"/>
        <end position="133"/>
    </location>
</feature>
<feature type="strand" evidence="7">
    <location>
        <begin position="134"/>
        <end position="139"/>
    </location>
</feature>
<feature type="strand" evidence="7">
    <location>
        <begin position="148"/>
        <end position="150"/>
    </location>
</feature>
<feature type="helix" evidence="7">
    <location>
        <begin position="154"/>
        <end position="162"/>
    </location>
</feature>
<feature type="strand" evidence="7">
    <location>
        <begin position="169"/>
        <end position="172"/>
    </location>
</feature>
<feature type="helix" evidence="7">
    <location>
        <begin position="191"/>
        <end position="193"/>
    </location>
</feature>
<feature type="turn" evidence="7">
    <location>
        <begin position="195"/>
        <end position="197"/>
    </location>
</feature>
<feature type="strand" evidence="7">
    <location>
        <begin position="200"/>
        <end position="205"/>
    </location>
</feature>
<feature type="strand" evidence="7">
    <location>
        <begin position="207"/>
        <end position="218"/>
    </location>
</feature>
<feature type="strand" evidence="7">
    <location>
        <begin position="229"/>
        <end position="236"/>
    </location>
</feature>
<feature type="strand" evidence="7">
    <location>
        <begin position="243"/>
        <end position="246"/>
    </location>
</feature>
<feature type="strand" evidence="7">
    <location>
        <begin position="248"/>
        <end position="251"/>
    </location>
</feature>
<feature type="strand" evidence="7">
    <location>
        <begin position="257"/>
        <end position="261"/>
    </location>
</feature>
<feature type="helix" evidence="7">
    <location>
        <begin position="273"/>
        <end position="275"/>
    </location>
</feature>
<feature type="strand" evidence="7">
    <location>
        <begin position="291"/>
        <end position="296"/>
    </location>
</feature>
<feature type="turn" evidence="7">
    <location>
        <begin position="297"/>
        <end position="300"/>
    </location>
</feature>
<feature type="strand" evidence="7">
    <location>
        <begin position="301"/>
        <end position="311"/>
    </location>
</feature>
<feature type="helix" evidence="7">
    <location>
        <begin position="313"/>
        <end position="316"/>
    </location>
</feature>
<feature type="strand" evidence="7">
    <location>
        <begin position="319"/>
        <end position="324"/>
    </location>
</feature>
<feature type="helix" evidence="7">
    <location>
        <begin position="327"/>
        <end position="337"/>
    </location>
</feature>
<feature type="strand" evidence="7">
    <location>
        <begin position="338"/>
        <end position="354"/>
    </location>
</feature>
<feature type="strand" evidence="7">
    <location>
        <begin position="357"/>
        <end position="362"/>
    </location>
</feature>
<feature type="strand" evidence="7">
    <location>
        <begin position="365"/>
        <end position="368"/>
    </location>
</feature>
<feature type="strand" evidence="7">
    <location>
        <begin position="376"/>
        <end position="378"/>
    </location>
</feature>
<feature type="helix" evidence="7">
    <location>
        <begin position="379"/>
        <end position="384"/>
    </location>
</feature>
<feature type="strand" evidence="7">
    <location>
        <begin position="388"/>
        <end position="401"/>
    </location>
</feature>
<feature type="strand" evidence="7">
    <location>
        <begin position="410"/>
        <end position="412"/>
    </location>
</feature>
<feature type="strand" evidence="7">
    <location>
        <begin position="414"/>
        <end position="422"/>
    </location>
</feature>
<feature type="strand" evidence="7">
    <location>
        <begin position="426"/>
        <end position="430"/>
    </location>
</feature>
<feature type="strand" evidence="7">
    <location>
        <begin position="432"/>
        <end position="434"/>
    </location>
</feature>
<feature type="strand" evidence="7">
    <location>
        <begin position="439"/>
        <end position="442"/>
    </location>
</feature>
<feature type="strand" evidence="7">
    <location>
        <begin position="451"/>
        <end position="462"/>
    </location>
</feature>
<feature type="strand" evidence="7">
    <location>
        <begin position="465"/>
        <end position="467"/>
    </location>
</feature>
<feature type="strand" evidence="7">
    <location>
        <begin position="471"/>
        <end position="474"/>
    </location>
</feature>
<feature type="strand" evidence="7">
    <location>
        <begin position="476"/>
        <end position="481"/>
    </location>
</feature>
<feature type="strand" evidence="7">
    <location>
        <begin position="491"/>
        <end position="493"/>
    </location>
</feature>
<feature type="strand" evidence="7">
    <location>
        <begin position="497"/>
        <end position="499"/>
    </location>
</feature>
<feature type="strand" evidence="7">
    <location>
        <begin position="504"/>
        <end position="510"/>
    </location>
</feature>
<feature type="helix" evidence="7">
    <location>
        <begin position="516"/>
        <end position="518"/>
    </location>
</feature>
<feature type="strand" evidence="7">
    <location>
        <begin position="519"/>
        <end position="521"/>
    </location>
</feature>
<feature type="strand" evidence="7">
    <location>
        <begin position="526"/>
        <end position="529"/>
    </location>
</feature>
<feature type="strand" evidence="7">
    <location>
        <begin position="535"/>
        <end position="538"/>
    </location>
</feature>
<feature type="strand" evidence="7">
    <location>
        <begin position="541"/>
        <end position="544"/>
    </location>
</feature>
<feature type="strand" evidence="7">
    <location>
        <begin position="547"/>
        <end position="550"/>
    </location>
</feature>
<feature type="strand" evidence="7">
    <location>
        <begin position="558"/>
        <end position="562"/>
    </location>
</feature>
<feature type="helix" evidence="7">
    <location>
        <begin position="571"/>
        <end position="573"/>
    </location>
</feature>
<feature type="strand" evidence="7">
    <location>
        <begin position="577"/>
        <end position="579"/>
    </location>
</feature>
<feature type="strand" evidence="7">
    <location>
        <begin position="600"/>
        <end position="602"/>
    </location>
</feature>
<feature type="turn" evidence="7">
    <location>
        <begin position="603"/>
        <end position="606"/>
    </location>
</feature>
<feature type="strand" evidence="7">
    <location>
        <begin position="607"/>
        <end position="611"/>
    </location>
</feature>
<feature type="strand" evidence="7">
    <location>
        <begin position="630"/>
        <end position="638"/>
    </location>
</feature>
<feature type="helix" evidence="7">
    <location>
        <begin position="639"/>
        <end position="653"/>
    </location>
</feature>
<feature type="strand" evidence="7">
    <location>
        <begin position="660"/>
        <end position="663"/>
    </location>
</feature>
<feature type="strand" evidence="7">
    <location>
        <begin position="673"/>
        <end position="678"/>
    </location>
</feature>
<feature type="strand" evidence="7">
    <location>
        <begin position="685"/>
        <end position="688"/>
    </location>
</feature>
<feature type="strand" evidence="7">
    <location>
        <begin position="690"/>
        <end position="693"/>
    </location>
</feature>
<feature type="strand" evidence="7">
    <location>
        <begin position="695"/>
        <end position="707"/>
    </location>
</feature>
<feature type="helix" evidence="7">
    <location>
        <begin position="728"/>
        <end position="730"/>
    </location>
</feature>
<feature type="helix" evidence="7">
    <location>
        <begin position="732"/>
        <end position="734"/>
    </location>
</feature>
<feature type="strand" evidence="7">
    <location>
        <begin position="745"/>
        <end position="754"/>
    </location>
</feature>
<feature type="strand" evidence="7">
    <location>
        <begin position="759"/>
        <end position="762"/>
    </location>
</feature>
<feature type="strand" evidence="7">
    <location>
        <begin position="766"/>
        <end position="775"/>
    </location>
</feature>
<feature type="strand" evidence="7">
    <location>
        <begin position="780"/>
        <end position="785"/>
    </location>
</feature>
<feature type="strand" evidence="7">
    <location>
        <begin position="791"/>
        <end position="794"/>
    </location>
</feature>
<feature type="turn" evidence="7">
    <location>
        <begin position="796"/>
        <end position="798"/>
    </location>
</feature>
<feature type="strand" evidence="7">
    <location>
        <begin position="801"/>
        <end position="804"/>
    </location>
</feature>
<feature type="helix" evidence="7">
    <location>
        <begin position="810"/>
        <end position="813"/>
    </location>
</feature>
<feature type="strand" evidence="7">
    <location>
        <begin position="819"/>
        <end position="823"/>
    </location>
</feature>
<feature type="strand" evidence="7">
    <location>
        <begin position="825"/>
        <end position="827"/>
    </location>
</feature>
<feature type="strand" evidence="7">
    <location>
        <begin position="832"/>
        <end position="842"/>
    </location>
</feature>
<feature type="strand" evidence="7">
    <location>
        <begin position="844"/>
        <end position="846"/>
    </location>
</feature>
<feature type="strand" evidence="7">
    <location>
        <begin position="851"/>
        <end position="854"/>
    </location>
</feature>
<feature type="strand" evidence="7">
    <location>
        <begin position="858"/>
        <end position="861"/>
    </location>
</feature>
<feature type="strand" evidence="7">
    <location>
        <begin position="866"/>
        <end position="882"/>
    </location>
</feature>
<feature type="turn" evidence="7">
    <location>
        <begin position="886"/>
        <end position="888"/>
    </location>
</feature>
<feature type="strand" evidence="7">
    <location>
        <begin position="894"/>
        <end position="911"/>
    </location>
</feature>
<feature type="helix" evidence="7">
    <location>
        <begin position="912"/>
        <end position="914"/>
    </location>
</feature>
<feature type="strand" evidence="7">
    <location>
        <begin position="919"/>
        <end position="926"/>
    </location>
</feature>
<feature type="strand" evidence="7">
    <location>
        <begin position="928"/>
        <end position="938"/>
    </location>
</feature>
<feature type="strand" evidence="7">
    <location>
        <begin position="946"/>
        <end position="950"/>
    </location>
</feature>
<feature type="strand" evidence="7">
    <location>
        <begin position="959"/>
        <end position="965"/>
    </location>
</feature>
<feature type="strand" evidence="7">
    <location>
        <begin position="976"/>
        <end position="980"/>
    </location>
</feature>
<feature type="strand" evidence="7">
    <location>
        <begin position="983"/>
        <end position="987"/>
    </location>
</feature>
<keyword id="KW-0002">3D-structure</keyword>
<keyword id="KW-0998">Cell outer membrane</keyword>
<keyword id="KW-0378">Hydrolase</keyword>
<keyword id="KW-0472">Membrane</keyword>
<keyword id="KW-0574">Periplasm</keyword>
<keyword id="KW-0645">Protease</keyword>
<keyword id="KW-1185">Reference proteome</keyword>
<keyword id="KW-0964">Secreted</keyword>
<keyword id="KW-0720">Serine protease</keyword>
<keyword id="KW-0732">Signal</keyword>
<keyword id="KW-0812">Transmembrane</keyword>
<keyword id="KW-1134">Transmembrane beta strand</keyword>
<keyword id="KW-0843">Virulence</keyword>
<keyword id="KW-0865">Zymogen</keyword>
<comment type="function">
    <text>Virulence factor; cleaves host immunoglobulin A producing intact Fc and Fab fragments.</text>
</comment>
<comment type="catalytic activity">
    <reaction>
        <text>Cleavage of immunoglobulin A molecules at certain Pro-|-Xaa bonds in the hinge region. No small molecule substrates are known.</text>
        <dbReference type="EC" id="3.4.21.72"/>
    </reaction>
</comment>
<comment type="subcellular location">
    <molecule>Immunoglobulin A1 protease autotransporter</molecule>
    <subcellularLocation>
        <location evidence="1">Periplasm</location>
    </subcellularLocation>
</comment>
<comment type="subcellular location">
    <molecule>Immunoglobulin A1 protease</molecule>
    <subcellularLocation>
        <location>Secreted</location>
    </subcellularLocation>
    <subcellularLocation>
        <location>Cell surface</location>
    </subcellularLocation>
</comment>
<comment type="subcellular location">
    <molecule>Immunoglobulin A1 protease translocator</molecule>
    <subcellularLocation>
        <location evidence="1">Cell outer membrane</location>
        <topology evidence="1">Multi-pass membrane protein</topology>
    </subcellularLocation>
    <text evidence="1">The cleaved C-terminal fragment (autotransporter domain) is localized in the outer membrane.</text>
</comment>
<comment type="domain">
    <text evidence="1">The signal peptide, cleaved at the inner membrane, guides the autotransporter protein to the periplasmic space. Then, insertion of the C-terminal translocator domain in the outer membrane forms a hydrophilic pore for the translocation of the passenger domain to the bacterial cell surface, with subsequent cleavage (By similarity).</text>
</comment>
<dbReference type="EC" id="3.4.21.72"/>
<dbReference type="EMBL" id="X59800">
    <property type="protein sequence ID" value="CAB56789.1"/>
    <property type="molecule type" value="Genomic_DNA"/>
</dbReference>
<dbReference type="EMBL" id="L42023">
    <property type="protein sequence ID" value="AAC22651.1"/>
    <property type="molecule type" value="Genomic_DNA"/>
</dbReference>
<dbReference type="PIR" id="H64106">
    <property type="entry name" value="H64106"/>
</dbReference>
<dbReference type="RefSeq" id="NP_439153.1">
    <property type="nucleotide sequence ID" value="NC_000907.1"/>
</dbReference>
<dbReference type="PDB" id="3H09">
    <property type="method" value="X-ray"/>
    <property type="resolution" value="1.75 A"/>
    <property type="chains" value="A/B=26-1014"/>
</dbReference>
<dbReference type="PDBsum" id="3H09"/>
<dbReference type="SMR" id="P44969"/>
<dbReference type="STRING" id="71421.HI_0990"/>
<dbReference type="BindingDB" id="P44969"/>
<dbReference type="ChEMBL" id="CHEMBL4739848"/>
<dbReference type="MEROPS" id="S06.007"/>
<dbReference type="EnsemblBacteria" id="AAC22651">
    <property type="protein sequence ID" value="AAC22651"/>
    <property type="gene ID" value="HI_0990"/>
</dbReference>
<dbReference type="KEGG" id="hin:HI_0990"/>
<dbReference type="PATRIC" id="fig|71421.8.peg.1033"/>
<dbReference type="eggNOG" id="COG3266">
    <property type="taxonomic scope" value="Bacteria"/>
</dbReference>
<dbReference type="eggNOG" id="COG3468">
    <property type="taxonomic scope" value="Bacteria"/>
</dbReference>
<dbReference type="HOGENOM" id="CLU_004023_0_0_6"/>
<dbReference type="OrthoDB" id="8610050at2"/>
<dbReference type="BioCyc" id="HINF71421:G1GJ1-1032-MONOMER"/>
<dbReference type="BRENDA" id="3.4.21.72">
    <property type="organism ID" value="2529"/>
</dbReference>
<dbReference type="EvolutionaryTrace" id="P44969"/>
<dbReference type="Proteomes" id="UP000000579">
    <property type="component" value="Chromosome"/>
</dbReference>
<dbReference type="GO" id="GO:0009279">
    <property type="term" value="C:cell outer membrane"/>
    <property type="evidence" value="ECO:0007669"/>
    <property type="project" value="UniProtKB-SubCell"/>
</dbReference>
<dbReference type="GO" id="GO:0009986">
    <property type="term" value="C:cell surface"/>
    <property type="evidence" value="ECO:0007669"/>
    <property type="project" value="UniProtKB-SubCell"/>
</dbReference>
<dbReference type="GO" id="GO:0005576">
    <property type="term" value="C:extracellular region"/>
    <property type="evidence" value="ECO:0007669"/>
    <property type="project" value="UniProtKB-SubCell"/>
</dbReference>
<dbReference type="GO" id="GO:0042597">
    <property type="term" value="C:periplasmic space"/>
    <property type="evidence" value="ECO:0007669"/>
    <property type="project" value="UniProtKB-SubCell"/>
</dbReference>
<dbReference type="GO" id="GO:0004252">
    <property type="term" value="F:serine-type endopeptidase activity"/>
    <property type="evidence" value="ECO:0007669"/>
    <property type="project" value="InterPro"/>
</dbReference>
<dbReference type="GO" id="GO:0006508">
    <property type="term" value="P:proteolysis"/>
    <property type="evidence" value="ECO:0007669"/>
    <property type="project" value="UniProtKB-KW"/>
</dbReference>
<dbReference type="CDD" id="cd01343">
    <property type="entry name" value="PL1_Passenger_AT"/>
    <property type="match status" value="1"/>
</dbReference>
<dbReference type="Gene3D" id="2.160.20.20">
    <property type="match status" value="1"/>
</dbReference>
<dbReference type="Gene3D" id="2.40.10.120">
    <property type="match status" value="1"/>
</dbReference>
<dbReference type="Gene3D" id="3.30.160.280">
    <property type="match status" value="1"/>
</dbReference>
<dbReference type="Gene3D" id="4.10.1240.40">
    <property type="match status" value="1"/>
</dbReference>
<dbReference type="Gene3D" id="2.40.128.130">
    <property type="entry name" value="Autotransporter beta-domain"/>
    <property type="match status" value="1"/>
</dbReference>
<dbReference type="InterPro" id="IPR005546">
    <property type="entry name" value="Autotransporte_beta"/>
</dbReference>
<dbReference type="InterPro" id="IPR036709">
    <property type="entry name" value="Autotransporte_beta_dom_sf"/>
</dbReference>
<dbReference type="InterPro" id="IPR012332">
    <property type="entry name" value="Autotransporter_pectin_lyase_C"/>
</dbReference>
<dbReference type="InterPro" id="IPR050909">
    <property type="entry name" value="Bact_Autotransporter_VF"/>
</dbReference>
<dbReference type="InterPro" id="IPR011050">
    <property type="entry name" value="Pectin_lyase_fold/virulence"/>
</dbReference>
<dbReference type="InterPro" id="IPR000710">
    <property type="entry name" value="Peptidase_S6"/>
</dbReference>
<dbReference type="InterPro" id="IPR030396">
    <property type="entry name" value="Peptidase_S6_dom"/>
</dbReference>
<dbReference type="InterPro" id="IPR004899">
    <property type="entry name" value="Pertactin_central"/>
</dbReference>
<dbReference type="PANTHER" id="PTHR12338">
    <property type="entry name" value="AUTOTRANSPORTER"/>
    <property type="match status" value="1"/>
</dbReference>
<dbReference type="PANTHER" id="PTHR12338:SF9">
    <property type="entry name" value="IMMUNOGLOBULIN A1 PROTEASE AUTOTRANSPORTER"/>
    <property type="match status" value="1"/>
</dbReference>
<dbReference type="Pfam" id="PF03797">
    <property type="entry name" value="Autotransporter"/>
    <property type="match status" value="1"/>
</dbReference>
<dbReference type="Pfam" id="PF24078">
    <property type="entry name" value="Beta-sol_PIC_HAP1_IgA0_2nd"/>
    <property type="match status" value="1"/>
</dbReference>
<dbReference type="Pfam" id="PF24077">
    <property type="entry name" value="IgA0_D2"/>
    <property type="match status" value="1"/>
</dbReference>
<dbReference type="Pfam" id="PF02395">
    <property type="entry name" value="Peptidase_S6"/>
    <property type="match status" value="1"/>
</dbReference>
<dbReference type="Pfam" id="PF03212">
    <property type="entry name" value="Pertactin"/>
    <property type="match status" value="1"/>
</dbReference>
<dbReference type="PRINTS" id="PR00921">
    <property type="entry name" value="IGASERPTASE"/>
</dbReference>
<dbReference type="SMART" id="SM00869">
    <property type="entry name" value="Autotransporter"/>
    <property type="match status" value="1"/>
</dbReference>
<dbReference type="SUPFAM" id="SSF103515">
    <property type="entry name" value="Autotransporter"/>
    <property type="match status" value="1"/>
</dbReference>
<dbReference type="SUPFAM" id="SSF51126">
    <property type="entry name" value="Pectin lyase-like"/>
    <property type="match status" value="1"/>
</dbReference>
<dbReference type="PROSITE" id="PS51208">
    <property type="entry name" value="AUTOTRANSPORTER"/>
    <property type="match status" value="1"/>
</dbReference>
<dbReference type="PROSITE" id="PS51691">
    <property type="entry name" value="PEPTIDASE_S6"/>
    <property type="match status" value="1"/>
</dbReference>
<sequence>MLNKKFKLNFIALTVAYALTPYTEAALVRDDVDYQIFRDFAENKGRFSVGATNVEVRDKNNHSLGNVLPNGIPMIDFSVVDVDKRIATLINPQYVVGVKHVSNGVSELHFGNLNGNMNNGNAKSHRDVSSEENRYFSVEKNEYPTKLNGKAVTTEDQTQKRREDYYMPRLDKFVTEVAPIEASTASSDAGTYNDQNKYPAFVRLGSGSQFIYKKGDNYSLILNNHEVGGNNLKLVGDAYTYGIAGTPYKVNHENNGLIGFGNSKEEHSDPKGILSQDPLTNYAVLGDSGSPLFVYDREKGKWLFLGSYDFWAGYNKKSWQEWNIYKPEFAKTVLDKDTAGSLTGSNTQYNWNPTGKTSVISNGSESLNVDLFDSSQDTDSKKNNHGKSVTLRGSGTLTLNNNIDQGAGGLFFEGDYEVKGTSDSTTWKGAGVSVADGKTVTWKVHNPKSDRLAKIGKGTLIVEGKGENKGSLKVGDGTVILKQQADANNKVKAFSQVGIVSGRSTVVLNDDKQVDPNSIYFGFRGGRLDANGNNLTFEHIRNIDDGARLVNHNTSKTSTVTITGESLITDPNTITPYNIDAPDEDNPYAFRRIKDGGQLYLNLENYTYYALRKGASTRSELPKNSGESNENWLYMGKTSDEAKRNVMNHINNERMNGFNGYFGEEEGKNNGNLNVTFKGKSEQNRFLLTGGTNLNGDLKVEKGTLFLSGRPTPHARDIAGISSTKKDQHFAENNEVVVEDDWINRNFKATNINVTNNATLYSGRNVANITSNITASDNAKVHIGYKAGDTVCVRSDYTGYVTCTTDKLSDKALNSFNATNVSGNVNLSGNANFVLGKANLFGTISGTGNSQVRLTENSHWHLTGDSNVNQLNLDKGHIHLNAQNDANKVTTYNTLTVNSLSGNGSFYYLTDLSNKQGDKVVVTKSATGNFTLQVADKTGEPTKNELTLFDASNATRNNLNVSLVGNTVDLGAWKYKLRNVNGRYDLYNPEVEKRNQTVDTTNITTPNNIQADVPSVPSNNEEIARVETPVPPPAPATPSETTETVAENSKQESKTVEKNEQDATETTAQNGEVAEEAKPSVKANTQTNEVAQSGSETEETQTTEIKETAKVEKEEKAKVEKDEIQEAPQMASETSPKQAKPAPKEVSTDTKVEETQVQAQPQTQSTTVAAAEATSPNSKPAEETQPSEKTNAEPVTPVVSKNQTENTTDQPTEREKTAKVETEKTQEPPQVASQASPKQEQSETVQPQAVLESENVPTVNNAEEVQAQLQTQTSATVSTKQPAPENSINTGSATAITETAEKSDKPQTETAASTEDASQHKANTVADNSVANNSESSDPKSRRRRSISQPQETSAEETTAASTDETTIADNSKRSKPNRRSRRSVRSEPTVTNGSDRSTVALRDLTSTNTNAVISDAMAKAQFVALNVGKAVSQHISQLEMNNEGQYNVWVSNTSMNENYSSSQYRRFSSKSTQTQLGWDQTISNNVQLGGVFTYVRNSNNFDKASSKNTLAQVNFYSKYYADNHWYLGIDLGYGKFQSNLKTNHNAKFARHTAQFGLTAGKAFNLGNFGITPIVGVRYSYLSNANFALAKDRIKVNPISVKTAFAQVDLSYTYHLGEFSVTPILSARYDTNQGSGKINVNQYDFAYNVENQQQYNAGLKLKYHNVKLSLIGGLTKAKQAEKQKTAELKLSFSF</sequence>
<reference key="1">
    <citation type="submission" date="1991-05" db="EMBL/GenBank/DDBJ databases">
        <authorList>
            <person name="Wright A."/>
            <person name="Fishman Y."/>
            <person name="Tai F."/>
            <person name="Plaut A.G."/>
        </authorList>
    </citation>
    <scope>NUCLEOTIDE SEQUENCE [GENOMIC DNA]</scope>
    <source>
        <strain>Serotype D</strain>
    </source>
</reference>
<reference key="2">
    <citation type="journal article" date="1995" name="Science">
        <title>Whole-genome random sequencing and assembly of Haemophilus influenzae Rd.</title>
        <authorList>
            <person name="Fleischmann R.D."/>
            <person name="Adams M.D."/>
            <person name="White O."/>
            <person name="Clayton R.A."/>
            <person name="Kirkness E.F."/>
            <person name="Kerlavage A.R."/>
            <person name="Bult C.J."/>
            <person name="Tomb J.-F."/>
            <person name="Dougherty B.A."/>
            <person name="Merrick J.M."/>
            <person name="McKenney K."/>
            <person name="Sutton G.G."/>
            <person name="FitzHugh W."/>
            <person name="Fields C.A."/>
            <person name="Gocayne J.D."/>
            <person name="Scott J.D."/>
            <person name="Shirley R."/>
            <person name="Liu L.-I."/>
            <person name="Glodek A."/>
            <person name="Kelley J.M."/>
            <person name="Weidman J.F."/>
            <person name="Phillips C.A."/>
            <person name="Spriggs T."/>
            <person name="Hedblom E."/>
            <person name="Cotton M.D."/>
            <person name="Utterback T.R."/>
            <person name="Hanna M.C."/>
            <person name="Nguyen D.T."/>
            <person name="Saudek D.M."/>
            <person name="Brandon R.C."/>
            <person name="Fine L.D."/>
            <person name="Fritchman J.L."/>
            <person name="Fuhrmann J.L."/>
            <person name="Geoghagen N.S.M."/>
            <person name="Gnehm C.L."/>
            <person name="McDonald L.A."/>
            <person name="Small K.V."/>
            <person name="Fraser C.M."/>
            <person name="Smith H.O."/>
            <person name="Venter J.C."/>
        </authorList>
    </citation>
    <scope>NUCLEOTIDE SEQUENCE [LARGE SCALE GENOMIC DNA]</scope>
    <source>
        <strain>ATCC 51907 / DSM 11121 / KW20 / Rd</strain>
    </source>
</reference>
<reference key="3">
    <citation type="journal article" date="1990" name="Infect. Immun.">
        <title>Localization of the cleavage site specificity determinant of Haemophilus influenzae immunoglobulin A1 protease genes.</title>
        <authorList>
            <person name="Grundy F.J."/>
            <person name="Plaut A.G."/>
            <person name="Wright A."/>
        </authorList>
    </citation>
    <scope>CHARACTERIZATION OF CLEAVAGE SITE SPECIFICITY</scope>
</reference>
<evidence type="ECO:0000250" key="1"/>
<evidence type="ECO:0000255" key="2"/>
<evidence type="ECO:0000255" key="3">
    <source>
        <dbReference type="PROSITE-ProRule" id="PRU00556"/>
    </source>
</evidence>
<evidence type="ECO:0000255" key="4">
    <source>
        <dbReference type="PROSITE-ProRule" id="PRU01028"/>
    </source>
</evidence>
<evidence type="ECO:0000256" key="5">
    <source>
        <dbReference type="SAM" id="MobiDB-lite"/>
    </source>
</evidence>
<evidence type="ECO:0000305" key="6"/>
<evidence type="ECO:0007829" key="7">
    <source>
        <dbReference type="PDB" id="3H09"/>
    </source>
</evidence>